<proteinExistence type="evidence at protein level"/>
<name>TFB2_SCHPO</name>
<feature type="chain" id="PRO_0000119266" description="General transcription and DNA repair factor IIH subunit tfb2">
    <location>
        <begin position="1"/>
        <end position="447"/>
    </location>
</feature>
<sequence length="447" mass="51192">MQAEFKSSINDFLEQLPNHARLYQKPAACLAVFRLLPILARQYVMSMLFNPMPVALSDFDLWIKLSSKVYQSESFNKLVRMHIFQFDGQYITLNSEFRKQFITALTGGGNHNSFGVPCTDEDKHLVTVDFLDAYAKETWETILHFMVGTPEAKFPGEGVLSLLKRGGLMSGPKNQLRITRAGFQFLLQDINAQIWTLLLDYLKLSEDTHMDPVQVLHFLFMLGSLDLGRAYSVDFLTDTQQIMLEDLREYGLVYQRKITSKRFYPTRLATGLTTDYRSLHGKQSENDDDKGFIIVETNYRLYAYTSSPLQIAIIGLFANLRARFSNLVVGVITRDSIRRALMNGIAAEQIITYLTTHAHPQMRSNVPLLPPTLVDQIYLWELEKNRLRATPGILFRDFLTDSGFDQAVEYAKELGVLVWDSSLKRMFFITTTGAQPMIAYLKRRAVK</sequence>
<comment type="function">
    <text evidence="2">Component of the general transcription and DNA repair factor IIH (TFIIH) core complex, which is involved in general and transcription-coupled nucleotide excision repair (NER) of damaged DNA and, when complexed to TFIIK, in RNA transcription by RNA polymerase II. In NER, TFIIH acts by opening DNA around the lesion to allow the excision of the damaged oligonucleotide and its replacement by a new DNA fragment. In transcription, TFIIH has an essential role in transcription initiation. When the pre-initiation complex (PIC) has been established, TFIIH is required for promoter opening and promoter escape. Phosphorylation of the C-terminal tail (CTD) of the largest subunit of RNA polymerase II by the kinase module TFIIK controls the initiation of transcription.</text>
</comment>
<comment type="subunit">
    <text evidence="3">Component of the 7-subunit TFIIH core complex composed of XPB/ptr8, XPD/rad15, ssl1, tfb1, tfb2, tfb4 and tfb5, which is active in NER. The core complex associates with the 3-subunit CTD-kinase module TFIIK composed of mcs2/cyclin H, mcs6/cdk7 and pmh1/tfb3 to form the 10-subunit holoenzyme (holo-TFIIH) active in transcription.</text>
</comment>
<comment type="subcellular location">
    <subcellularLocation>
        <location evidence="1">Nucleus</location>
    </subcellularLocation>
</comment>
<comment type="similarity">
    <text evidence="4">Belongs to the TFB2 family.</text>
</comment>
<gene>
    <name type="primary">tfb2</name>
    <name type="ORF">SPBC13G1.13</name>
    <name type="ORF">SPBC31F10.01</name>
</gene>
<organism>
    <name type="scientific">Schizosaccharomyces pombe (strain 972 / ATCC 24843)</name>
    <name type="common">Fission yeast</name>
    <dbReference type="NCBI Taxonomy" id="284812"/>
    <lineage>
        <taxon>Eukaryota</taxon>
        <taxon>Fungi</taxon>
        <taxon>Dikarya</taxon>
        <taxon>Ascomycota</taxon>
        <taxon>Taphrinomycotina</taxon>
        <taxon>Schizosaccharomycetes</taxon>
        <taxon>Schizosaccharomycetales</taxon>
        <taxon>Schizosaccharomycetaceae</taxon>
        <taxon>Schizosaccharomyces</taxon>
    </lineage>
</organism>
<dbReference type="EMBL" id="CU329671">
    <property type="protein sequence ID" value="CAA18666.1"/>
    <property type="molecule type" value="Genomic_DNA"/>
</dbReference>
<dbReference type="PIR" id="T39414">
    <property type="entry name" value="T39414"/>
</dbReference>
<dbReference type="RefSeq" id="NP_596563.1">
    <property type="nucleotide sequence ID" value="NM_001022484.2"/>
</dbReference>
<dbReference type="SMR" id="P87303"/>
<dbReference type="BioGRID" id="276340">
    <property type="interactions" value="6"/>
</dbReference>
<dbReference type="FunCoup" id="P87303">
    <property type="interactions" value="264"/>
</dbReference>
<dbReference type="IntAct" id="P87303">
    <property type="interactions" value="4"/>
</dbReference>
<dbReference type="STRING" id="284812.P87303"/>
<dbReference type="PaxDb" id="4896-SPBC13G1.13.1"/>
<dbReference type="EnsemblFungi" id="SPBC13G1.13.1">
    <property type="protein sequence ID" value="SPBC13G1.13.1:pep"/>
    <property type="gene ID" value="SPBC13G1.13"/>
</dbReference>
<dbReference type="GeneID" id="2539790"/>
<dbReference type="KEGG" id="spo:2539790"/>
<dbReference type="PomBase" id="SPBC13G1.13">
    <property type="gene designation" value="tfb2"/>
</dbReference>
<dbReference type="VEuPathDB" id="FungiDB:SPBC13G1.13"/>
<dbReference type="eggNOG" id="KOG3471">
    <property type="taxonomic scope" value="Eukaryota"/>
</dbReference>
<dbReference type="HOGENOM" id="CLU_027280_4_0_1"/>
<dbReference type="InParanoid" id="P87303"/>
<dbReference type="OMA" id="KGFIIIE"/>
<dbReference type="PhylomeDB" id="P87303"/>
<dbReference type="Reactome" id="R-SPO-113418">
    <property type="pathway name" value="Formation of the Early Elongation Complex"/>
</dbReference>
<dbReference type="Reactome" id="R-SPO-5696395">
    <property type="pathway name" value="Formation of Incision Complex in GG-NER"/>
</dbReference>
<dbReference type="Reactome" id="R-SPO-5696400">
    <property type="pathway name" value="Dual Incision in GG-NER"/>
</dbReference>
<dbReference type="Reactome" id="R-SPO-674695">
    <property type="pathway name" value="RNA Polymerase II Pre-transcription Events"/>
</dbReference>
<dbReference type="Reactome" id="R-SPO-6781823">
    <property type="pathway name" value="Formation of TC-NER Pre-Incision Complex"/>
</dbReference>
<dbReference type="Reactome" id="R-SPO-6782135">
    <property type="pathway name" value="Dual incision in TC-NER"/>
</dbReference>
<dbReference type="Reactome" id="R-SPO-6782210">
    <property type="pathway name" value="Gap-filling DNA repair synthesis and ligation in TC-NER"/>
</dbReference>
<dbReference type="Reactome" id="R-SPO-6796648">
    <property type="pathway name" value="TP53 Regulates Transcription of DNA Repair Genes"/>
</dbReference>
<dbReference type="Reactome" id="R-SPO-72086">
    <property type="pathway name" value="mRNA Capping"/>
</dbReference>
<dbReference type="Reactome" id="R-SPO-73772">
    <property type="pathway name" value="RNA Polymerase I Promoter Escape"/>
</dbReference>
<dbReference type="Reactome" id="R-SPO-73776">
    <property type="pathway name" value="RNA Polymerase II Promoter Escape"/>
</dbReference>
<dbReference type="Reactome" id="R-SPO-73779">
    <property type="pathway name" value="RNA Polymerase II Transcription Pre-Initiation And Promoter Opening"/>
</dbReference>
<dbReference type="Reactome" id="R-SPO-75953">
    <property type="pathway name" value="RNA Polymerase II Transcription Initiation"/>
</dbReference>
<dbReference type="Reactome" id="R-SPO-76042">
    <property type="pathway name" value="RNA Polymerase II Transcription Initiation And Promoter Clearance"/>
</dbReference>
<dbReference type="Reactome" id="R-SPO-77075">
    <property type="pathway name" value="RNA Pol II CTD phosphorylation and interaction with CE"/>
</dbReference>
<dbReference type="PRO" id="PR:P87303"/>
<dbReference type="Proteomes" id="UP000002485">
    <property type="component" value="Chromosome II"/>
</dbReference>
<dbReference type="GO" id="GO:0005737">
    <property type="term" value="C:cytoplasm"/>
    <property type="evidence" value="ECO:0007005"/>
    <property type="project" value="PomBase"/>
</dbReference>
<dbReference type="GO" id="GO:0000112">
    <property type="term" value="C:nucleotide-excision repair factor 3 complex"/>
    <property type="evidence" value="ECO:0000266"/>
    <property type="project" value="PomBase"/>
</dbReference>
<dbReference type="GO" id="GO:0000439">
    <property type="term" value="C:transcription factor TFIIH core complex"/>
    <property type="evidence" value="ECO:0000318"/>
    <property type="project" value="GO_Central"/>
</dbReference>
<dbReference type="GO" id="GO:0005675">
    <property type="term" value="C:transcription factor TFIIH holo complex"/>
    <property type="evidence" value="ECO:0000318"/>
    <property type="project" value="GO_Central"/>
</dbReference>
<dbReference type="GO" id="GO:0001671">
    <property type="term" value="F:ATPase activator activity"/>
    <property type="evidence" value="ECO:0007669"/>
    <property type="project" value="InterPro"/>
</dbReference>
<dbReference type="GO" id="GO:0003690">
    <property type="term" value="F:double-stranded DNA binding"/>
    <property type="evidence" value="ECO:0000318"/>
    <property type="project" value="GO_Central"/>
</dbReference>
<dbReference type="GO" id="GO:0016251">
    <property type="term" value="F:RNA polymerase II general transcription initiation factor activity"/>
    <property type="evidence" value="ECO:0000314"/>
    <property type="project" value="PomBase"/>
</dbReference>
<dbReference type="GO" id="GO:0006289">
    <property type="term" value="P:nucleotide-excision repair"/>
    <property type="evidence" value="ECO:0000318"/>
    <property type="project" value="GO_Central"/>
</dbReference>
<dbReference type="GO" id="GO:0006367">
    <property type="term" value="P:transcription initiation at RNA polymerase II promoter"/>
    <property type="evidence" value="ECO:0000314"/>
    <property type="project" value="PomBase"/>
</dbReference>
<dbReference type="FunFam" id="3.30.70.2610:FF:000001">
    <property type="entry name" value="General transcription factor IIH subunit 4"/>
    <property type="match status" value="1"/>
</dbReference>
<dbReference type="Gene3D" id="3.30.70.2610">
    <property type="match status" value="1"/>
</dbReference>
<dbReference type="InterPro" id="IPR040662">
    <property type="entry name" value="Tfb2_C"/>
</dbReference>
<dbReference type="InterPro" id="IPR004598">
    <property type="entry name" value="TFIIH_p52/Tfb2"/>
</dbReference>
<dbReference type="NCBIfam" id="TIGR00625">
    <property type="entry name" value="tfb2"/>
    <property type="match status" value="1"/>
</dbReference>
<dbReference type="PANTHER" id="PTHR13152:SF0">
    <property type="entry name" value="GENERAL TRANSCRIPTION FACTOR IIH SUBUNIT 4"/>
    <property type="match status" value="1"/>
</dbReference>
<dbReference type="PANTHER" id="PTHR13152">
    <property type="entry name" value="TFIIH, POLYPEPTIDE 4"/>
    <property type="match status" value="1"/>
</dbReference>
<dbReference type="Pfam" id="PF03849">
    <property type="entry name" value="Tfb2"/>
    <property type="match status" value="1"/>
</dbReference>
<dbReference type="Pfam" id="PF18307">
    <property type="entry name" value="Tfb2_C"/>
    <property type="match status" value="1"/>
</dbReference>
<keyword id="KW-0227">DNA damage</keyword>
<keyword id="KW-0234">DNA repair</keyword>
<keyword id="KW-0539">Nucleus</keyword>
<keyword id="KW-1185">Reference proteome</keyword>
<keyword id="KW-0804">Transcription</keyword>
<keyword id="KW-0805">Transcription regulation</keyword>
<evidence type="ECO:0000250" key="1"/>
<evidence type="ECO:0000250" key="2">
    <source>
        <dbReference type="UniProtKB" id="Q02939"/>
    </source>
</evidence>
<evidence type="ECO:0000269" key="3">
    <source>
    </source>
</evidence>
<evidence type="ECO:0000305" key="4"/>
<reference key="1">
    <citation type="journal article" date="2002" name="Nature">
        <title>The genome sequence of Schizosaccharomyces pombe.</title>
        <authorList>
            <person name="Wood V."/>
            <person name="Gwilliam R."/>
            <person name="Rajandream M.A."/>
            <person name="Lyne M.H."/>
            <person name="Lyne R."/>
            <person name="Stewart A."/>
            <person name="Sgouros J.G."/>
            <person name="Peat N."/>
            <person name="Hayles J."/>
            <person name="Baker S.G."/>
            <person name="Basham D."/>
            <person name="Bowman S."/>
            <person name="Brooks K."/>
            <person name="Brown D."/>
            <person name="Brown S."/>
            <person name="Chillingworth T."/>
            <person name="Churcher C.M."/>
            <person name="Collins M."/>
            <person name="Connor R."/>
            <person name="Cronin A."/>
            <person name="Davis P."/>
            <person name="Feltwell T."/>
            <person name="Fraser A."/>
            <person name="Gentles S."/>
            <person name="Goble A."/>
            <person name="Hamlin N."/>
            <person name="Harris D.E."/>
            <person name="Hidalgo J."/>
            <person name="Hodgson G."/>
            <person name="Holroyd S."/>
            <person name="Hornsby T."/>
            <person name="Howarth S."/>
            <person name="Huckle E.J."/>
            <person name="Hunt S."/>
            <person name="Jagels K."/>
            <person name="James K.D."/>
            <person name="Jones L."/>
            <person name="Jones M."/>
            <person name="Leather S."/>
            <person name="McDonald S."/>
            <person name="McLean J."/>
            <person name="Mooney P."/>
            <person name="Moule S."/>
            <person name="Mungall K.L."/>
            <person name="Murphy L.D."/>
            <person name="Niblett D."/>
            <person name="Odell C."/>
            <person name="Oliver K."/>
            <person name="O'Neil S."/>
            <person name="Pearson D."/>
            <person name="Quail M.A."/>
            <person name="Rabbinowitsch E."/>
            <person name="Rutherford K.M."/>
            <person name="Rutter S."/>
            <person name="Saunders D."/>
            <person name="Seeger K."/>
            <person name="Sharp S."/>
            <person name="Skelton J."/>
            <person name="Simmonds M.N."/>
            <person name="Squares R."/>
            <person name="Squares S."/>
            <person name="Stevens K."/>
            <person name="Taylor K."/>
            <person name="Taylor R.G."/>
            <person name="Tivey A."/>
            <person name="Walsh S.V."/>
            <person name="Warren T."/>
            <person name="Whitehead S."/>
            <person name="Woodward J.R."/>
            <person name="Volckaert G."/>
            <person name="Aert R."/>
            <person name="Robben J."/>
            <person name="Grymonprez B."/>
            <person name="Weltjens I."/>
            <person name="Vanstreels E."/>
            <person name="Rieger M."/>
            <person name="Schaefer M."/>
            <person name="Mueller-Auer S."/>
            <person name="Gabel C."/>
            <person name="Fuchs M."/>
            <person name="Duesterhoeft A."/>
            <person name="Fritzc C."/>
            <person name="Holzer E."/>
            <person name="Moestl D."/>
            <person name="Hilbert H."/>
            <person name="Borzym K."/>
            <person name="Langer I."/>
            <person name="Beck A."/>
            <person name="Lehrach H."/>
            <person name="Reinhardt R."/>
            <person name="Pohl T.M."/>
            <person name="Eger P."/>
            <person name="Zimmermann W."/>
            <person name="Wedler H."/>
            <person name="Wambutt R."/>
            <person name="Purnelle B."/>
            <person name="Goffeau A."/>
            <person name="Cadieu E."/>
            <person name="Dreano S."/>
            <person name="Gloux S."/>
            <person name="Lelaure V."/>
            <person name="Mottier S."/>
            <person name="Galibert F."/>
            <person name="Aves S.J."/>
            <person name="Xiang Z."/>
            <person name="Hunt C."/>
            <person name="Moore K."/>
            <person name="Hurst S.M."/>
            <person name="Lucas M."/>
            <person name="Rochet M."/>
            <person name="Gaillardin C."/>
            <person name="Tallada V.A."/>
            <person name="Garzon A."/>
            <person name="Thode G."/>
            <person name="Daga R.R."/>
            <person name="Cruzado L."/>
            <person name="Jimenez J."/>
            <person name="Sanchez M."/>
            <person name="del Rey F."/>
            <person name="Benito J."/>
            <person name="Dominguez A."/>
            <person name="Revuelta J.L."/>
            <person name="Moreno S."/>
            <person name="Armstrong J."/>
            <person name="Forsburg S.L."/>
            <person name="Cerutti L."/>
            <person name="Lowe T."/>
            <person name="McCombie W.R."/>
            <person name="Paulsen I."/>
            <person name="Potashkin J."/>
            <person name="Shpakovski G.V."/>
            <person name="Ussery D."/>
            <person name="Barrell B.G."/>
            <person name="Nurse P."/>
        </authorList>
    </citation>
    <scope>NUCLEOTIDE SEQUENCE [LARGE SCALE GENOMIC DNA]</scope>
    <source>
        <strain>972 / ATCC 24843</strain>
    </source>
</reference>
<reference key="2">
    <citation type="journal article" date="2003" name="J. Biol. Chem.">
        <title>Mediator influences Schizosaccharomyces pombe RNA polymerase II-dependent transcription in vitro.</title>
        <authorList>
            <person name="Spaehr H."/>
            <person name="Khorosjutina O."/>
            <person name="Baraznenok V."/>
            <person name="Linder T."/>
            <person name="Samuelsen C.O."/>
            <person name="Hermand D."/>
            <person name="Maekelae T.P."/>
            <person name="Holmberg S."/>
            <person name="Gustafsson C.M."/>
        </authorList>
    </citation>
    <scope>IDENTIFICATION</scope>
    <scope>SUBUNIT</scope>
</reference>
<protein>
    <recommendedName>
        <fullName>General transcription and DNA repair factor IIH subunit tfb2</fullName>
        <shortName>TFIIH subunit tfb2</shortName>
    </recommendedName>
    <alternativeName>
        <fullName>RNA polymerase II transcription factor B subunit 2</fullName>
    </alternativeName>
</protein>
<accession>P87303</accession>